<evidence type="ECO:0000255" key="1">
    <source>
        <dbReference type="HAMAP-Rule" id="MF_00518"/>
    </source>
</evidence>
<dbReference type="EC" id="3.1.1.96" evidence="1"/>
<dbReference type="EMBL" id="CP000082">
    <property type="protein sequence ID" value="AAZ19772.1"/>
    <property type="molecule type" value="Genomic_DNA"/>
</dbReference>
<dbReference type="RefSeq" id="WP_011281181.1">
    <property type="nucleotide sequence ID" value="NC_007204.1"/>
</dbReference>
<dbReference type="SMR" id="Q4FQD6"/>
<dbReference type="STRING" id="259536.Psyc_1924"/>
<dbReference type="KEGG" id="par:Psyc_1924"/>
<dbReference type="eggNOG" id="COG1490">
    <property type="taxonomic scope" value="Bacteria"/>
</dbReference>
<dbReference type="HOGENOM" id="CLU_076901_1_1_6"/>
<dbReference type="OrthoDB" id="9801395at2"/>
<dbReference type="Proteomes" id="UP000000546">
    <property type="component" value="Chromosome"/>
</dbReference>
<dbReference type="GO" id="GO:0005737">
    <property type="term" value="C:cytoplasm"/>
    <property type="evidence" value="ECO:0007669"/>
    <property type="project" value="UniProtKB-SubCell"/>
</dbReference>
<dbReference type="GO" id="GO:0051500">
    <property type="term" value="F:D-tyrosyl-tRNA(Tyr) deacylase activity"/>
    <property type="evidence" value="ECO:0007669"/>
    <property type="project" value="TreeGrafter"/>
</dbReference>
<dbReference type="GO" id="GO:0106026">
    <property type="term" value="F:Gly-tRNA(Ala) deacylase activity"/>
    <property type="evidence" value="ECO:0007669"/>
    <property type="project" value="UniProtKB-UniRule"/>
</dbReference>
<dbReference type="GO" id="GO:0043908">
    <property type="term" value="F:Ser(Gly)-tRNA(Ala) hydrolase activity"/>
    <property type="evidence" value="ECO:0007669"/>
    <property type="project" value="UniProtKB-UniRule"/>
</dbReference>
<dbReference type="GO" id="GO:0000049">
    <property type="term" value="F:tRNA binding"/>
    <property type="evidence" value="ECO:0007669"/>
    <property type="project" value="UniProtKB-UniRule"/>
</dbReference>
<dbReference type="GO" id="GO:0019478">
    <property type="term" value="P:D-amino acid catabolic process"/>
    <property type="evidence" value="ECO:0007669"/>
    <property type="project" value="UniProtKB-UniRule"/>
</dbReference>
<dbReference type="FunFam" id="3.50.80.10:FF:000001">
    <property type="entry name" value="D-aminoacyl-tRNA deacylase"/>
    <property type="match status" value="1"/>
</dbReference>
<dbReference type="Gene3D" id="3.50.80.10">
    <property type="entry name" value="D-tyrosyl-tRNA(Tyr) deacylase"/>
    <property type="match status" value="1"/>
</dbReference>
<dbReference type="HAMAP" id="MF_00518">
    <property type="entry name" value="Deacylase_Dtd"/>
    <property type="match status" value="1"/>
</dbReference>
<dbReference type="InterPro" id="IPR003732">
    <property type="entry name" value="Daa-tRNA_deacyls_DTD"/>
</dbReference>
<dbReference type="InterPro" id="IPR023509">
    <property type="entry name" value="DTD-like_sf"/>
</dbReference>
<dbReference type="NCBIfam" id="TIGR00256">
    <property type="entry name" value="D-aminoacyl-tRNA deacylase"/>
    <property type="match status" value="1"/>
</dbReference>
<dbReference type="PANTHER" id="PTHR10472:SF5">
    <property type="entry name" value="D-AMINOACYL-TRNA DEACYLASE 1"/>
    <property type="match status" value="1"/>
</dbReference>
<dbReference type="PANTHER" id="PTHR10472">
    <property type="entry name" value="D-TYROSYL-TRNA TYR DEACYLASE"/>
    <property type="match status" value="1"/>
</dbReference>
<dbReference type="Pfam" id="PF02580">
    <property type="entry name" value="Tyr_Deacylase"/>
    <property type="match status" value="1"/>
</dbReference>
<dbReference type="SUPFAM" id="SSF69500">
    <property type="entry name" value="DTD-like"/>
    <property type="match status" value="1"/>
</dbReference>
<sequence length="151" mass="16422">MRALIQRVKHASVSVDGHDVGAIEHGVLAYIGLGHDDNLQSAQRMVDKILTYRIFENDDDPAKYGKLDKNVQQVDGGLLLVSQFTLMAKTDKGRRPDFGGAMAPDAAQDLFAQLIAYAKTQHVDVATGQFGADMQVLSVNDGPLNFLLEVP</sequence>
<reference key="1">
    <citation type="journal article" date="2010" name="Appl. Environ. Microbiol.">
        <title>The genome sequence of Psychrobacter arcticus 273-4, a psychroactive Siberian permafrost bacterium, reveals mechanisms for adaptation to low-temperature growth.</title>
        <authorList>
            <person name="Ayala-del-Rio H.L."/>
            <person name="Chain P.S."/>
            <person name="Grzymski J.J."/>
            <person name="Ponder M.A."/>
            <person name="Ivanova N."/>
            <person name="Bergholz P.W."/>
            <person name="Di Bartolo G."/>
            <person name="Hauser L."/>
            <person name="Land M."/>
            <person name="Bakermans C."/>
            <person name="Rodrigues D."/>
            <person name="Klappenbach J."/>
            <person name="Zarka D."/>
            <person name="Larimer F."/>
            <person name="Richardson P."/>
            <person name="Murray A."/>
            <person name="Thomashow M."/>
            <person name="Tiedje J.M."/>
        </authorList>
    </citation>
    <scope>NUCLEOTIDE SEQUENCE [LARGE SCALE GENOMIC DNA]</scope>
    <source>
        <strain>DSM 17307 / VKM B-2377 / 273-4</strain>
    </source>
</reference>
<comment type="function">
    <text evidence="1">An aminoacyl-tRNA editing enzyme that deacylates mischarged D-aminoacyl-tRNAs. Also deacylates mischarged glycyl-tRNA(Ala), protecting cells against glycine mischarging by AlaRS. Acts via tRNA-based rather than protein-based catalysis; rejects L-amino acids rather than detecting D-amino acids in the active site. By recycling D-aminoacyl-tRNA to D-amino acids and free tRNA molecules, this enzyme counteracts the toxicity associated with the formation of D-aminoacyl-tRNA entities in vivo and helps enforce protein L-homochirality.</text>
</comment>
<comment type="catalytic activity">
    <reaction evidence="1">
        <text>glycyl-tRNA(Ala) + H2O = tRNA(Ala) + glycine + H(+)</text>
        <dbReference type="Rhea" id="RHEA:53744"/>
        <dbReference type="Rhea" id="RHEA-COMP:9657"/>
        <dbReference type="Rhea" id="RHEA-COMP:13640"/>
        <dbReference type="ChEBI" id="CHEBI:15377"/>
        <dbReference type="ChEBI" id="CHEBI:15378"/>
        <dbReference type="ChEBI" id="CHEBI:57305"/>
        <dbReference type="ChEBI" id="CHEBI:78442"/>
        <dbReference type="ChEBI" id="CHEBI:78522"/>
        <dbReference type="EC" id="3.1.1.96"/>
    </reaction>
</comment>
<comment type="catalytic activity">
    <reaction evidence="1">
        <text>a D-aminoacyl-tRNA + H2O = a tRNA + a D-alpha-amino acid + H(+)</text>
        <dbReference type="Rhea" id="RHEA:13953"/>
        <dbReference type="Rhea" id="RHEA-COMP:10123"/>
        <dbReference type="Rhea" id="RHEA-COMP:10124"/>
        <dbReference type="ChEBI" id="CHEBI:15377"/>
        <dbReference type="ChEBI" id="CHEBI:15378"/>
        <dbReference type="ChEBI" id="CHEBI:59871"/>
        <dbReference type="ChEBI" id="CHEBI:78442"/>
        <dbReference type="ChEBI" id="CHEBI:79333"/>
        <dbReference type="EC" id="3.1.1.96"/>
    </reaction>
</comment>
<comment type="subunit">
    <text evidence="1">Homodimer.</text>
</comment>
<comment type="subcellular location">
    <subcellularLocation>
        <location evidence="1">Cytoplasm</location>
    </subcellularLocation>
</comment>
<comment type="domain">
    <text evidence="1">A Gly-cisPro motif from one monomer fits into the active site of the other monomer to allow specific chiral rejection of L-amino acids.</text>
</comment>
<comment type="similarity">
    <text evidence="1">Belongs to the DTD family.</text>
</comment>
<accession>Q4FQD6</accession>
<name>DTD_PSYA2</name>
<keyword id="KW-0963">Cytoplasm</keyword>
<keyword id="KW-0378">Hydrolase</keyword>
<keyword id="KW-1185">Reference proteome</keyword>
<keyword id="KW-0694">RNA-binding</keyword>
<keyword id="KW-0820">tRNA-binding</keyword>
<organism>
    <name type="scientific">Psychrobacter arcticus (strain DSM 17307 / VKM B-2377 / 273-4)</name>
    <dbReference type="NCBI Taxonomy" id="259536"/>
    <lineage>
        <taxon>Bacteria</taxon>
        <taxon>Pseudomonadati</taxon>
        <taxon>Pseudomonadota</taxon>
        <taxon>Gammaproteobacteria</taxon>
        <taxon>Moraxellales</taxon>
        <taxon>Moraxellaceae</taxon>
        <taxon>Psychrobacter</taxon>
    </lineage>
</organism>
<proteinExistence type="inferred from homology"/>
<protein>
    <recommendedName>
        <fullName evidence="1">D-aminoacyl-tRNA deacylase</fullName>
        <shortName evidence="1">DTD</shortName>
        <ecNumber evidence="1">3.1.1.96</ecNumber>
    </recommendedName>
    <alternativeName>
        <fullName evidence="1">Gly-tRNA(Ala) deacylase</fullName>
    </alternativeName>
</protein>
<feature type="chain" id="PRO_1000127562" description="D-aminoacyl-tRNA deacylase">
    <location>
        <begin position="1"/>
        <end position="151"/>
    </location>
</feature>
<feature type="short sequence motif" description="Gly-cisPro motif, important for rejection of L-amino acids" evidence="1">
    <location>
        <begin position="142"/>
        <end position="143"/>
    </location>
</feature>
<gene>
    <name evidence="1" type="primary">dtd</name>
    <name type="ordered locus">Psyc_1924</name>
</gene>